<protein>
    <recommendedName>
        <fullName evidence="1">Probable GTP-binding protein EngB</fullName>
    </recommendedName>
</protein>
<keyword id="KW-0131">Cell cycle</keyword>
<keyword id="KW-0132">Cell division</keyword>
<keyword id="KW-0342">GTP-binding</keyword>
<keyword id="KW-0460">Magnesium</keyword>
<keyword id="KW-0479">Metal-binding</keyword>
<keyword id="KW-0547">Nucleotide-binding</keyword>
<keyword id="KW-0717">Septation</keyword>
<proteinExistence type="inferred from homology"/>
<name>ENGB_DECAR</name>
<comment type="function">
    <text evidence="1">Necessary for normal cell division and for the maintenance of normal septation.</text>
</comment>
<comment type="cofactor">
    <cofactor evidence="1">
        <name>Mg(2+)</name>
        <dbReference type="ChEBI" id="CHEBI:18420"/>
    </cofactor>
</comment>
<comment type="similarity">
    <text evidence="1">Belongs to the TRAFAC class TrmE-Era-EngA-EngB-Septin-like GTPase superfamily. EngB GTPase family.</text>
</comment>
<gene>
    <name evidence="1" type="primary">engB</name>
    <name type="ordered locus">Daro_0625</name>
</gene>
<accession>Q47IE9</accession>
<reference key="1">
    <citation type="journal article" date="2009" name="BMC Genomics">
        <title>Metabolic analysis of the soil microbe Dechloromonas aromatica str. RCB: indications of a surprisingly complex life-style and cryptic anaerobic pathways for aromatic degradation.</title>
        <authorList>
            <person name="Salinero K.K."/>
            <person name="Keller K."/>
            <person name="Feil W.S."/>
            <person name="Feil H."/>
            <person name="Trong S."/>
            <person name="Di Bartolo G."/>
            <person name="Lapidus A."/>
        </authorList>
    </citation>
    <scope>NUCLEOTIDE SEQUENCE [LARGE SCALE GENOMIC DNA]</scope>
    <source>
        <strain>RCB</strain>
    </source>
</reference>
<feature type="chain" id="PRO_0000266849" description="Probable GTP-binding protein EngB">
    <location>
        <begin position="1"/>
        <end position="220"/>
    </location>
</feature>
<feature type="domain" description="EngB-type G" evidence="1">
    <location>
        <begin position="23"/>
        <end position="199"/>
    </location>
</feature>
<feature type="binding site" evidence="1">
    <location>
        <position position="38"/>
    </location>
    <ligand>
        <name>Mg(2+)</name>
        <dbReference type="ChEBI" id="CHEBI:18420"/>
    </ligand>
</feature>
<feature type="binding site" evidence="1">
    <location>
        <position position="60"/>
    </location>
    <ligand>
        <name>Mg(2+)</name>
        <dbReference type="ChEBI" id="CHEBI:18420"/>
    </ligand>
</feature>
<dbReference type="EMBL" id="CP000089">
    <property type="protein sequence ID" value="AAZ45382.1"/>
    <property type="molecule type" value="Genomic_DNA"/>
</dbReference>
<dbReference type="SMR" id="Q47IE9"/>
<dbReference type="STRING" id="159087.Daro_0625"/>
<dbReference type="KEGG" id="dar:Daro_0625"/>
<dbReference type="eggNOG" id="COG0218">
    <property type="taxonomic scope" value="Bacteria"/>
</dbReference>
<dbReference type="HOGENOM" id="CLU_033732_1_1_4"/>
<dbReference type="OrthoDB" id="9804921at2"/>
<dbReference type="GO" id="GO:0005829">
    <property type="term" value="C:cytosol"/>
    <property type="evidence" value="ECO:0007669"/>
    <property type="project" value="TreeGrafter"/>
</dbReference>
<dbReference type="GO" id="GO:0005525">
    <property type="term" value="F:GTP binding"/>
    <property type="evidence" value="ECO:0007669"/>
    <property type="project" value="UniProtKB-UniRule"/>
</dbReference>
<dbReference type="GO" id="GO:0046872">
    <property type="term" value="F:metal ion binding"/>
    <property type="evidence" value="ECO:0007669"/>
    <property type="project" value="UniProtKB-KW"/>
</dbReference>
<dbReference type="GO" id="GO:0000917">
    <property type="term" value="P:division septum assembly"/>
    <property type="evidence" value="ECO:0007669"/>
    <property type="project" value="UniProtKB-KW"/>
</dbReference>
<dbReference type="CDD" id="cd01876">
    <property type="entry name" value="YihA_EngB"/>
    <property type="match status" value="1"/>
</dbReference>
<dbReference type="FunFam" id="3.40.50.300:FF:000098">
    <property type="entry name" value="Probable GTP-binding protein EngB"/>
    <property type="match status" value="1"/>
</dbReference>
<dbReference type="Gene3D" id="3.40.50.300">
    <property type="entry name" value="P-loop containing nucleotide triphosphate hydrolases"/>
    <property type="match status" value="1"/>
</dbReference>
<dbReference type="HAMAP" id="MF_00321">
    <property type="entry name" value="GTPase_EngB"/>
    <property type="match status" value="1"/>
</dbReference>
<dbReference type="InterPro" id="IPR030393">
    <property type="entry name" value="G_ENGB_dom"/>
</dbReference>
<dbReference type="InterPro" id="IPR006073">
    <property type="entry name" value="GTP-bd"/>
</dbReference>
<dbReference type="InterPro" id="IPR019987">
    <property type="entry name" value="GTP-bd_ribosome_bio_YsxC"/>
</dbReference>
<dbReference type="InterPro" id="IPR027417">
    <property type="entry name" value="P-loop_NTPase"/>
</dbReference>
<dbReference type="NCBIfam" id="TIGR03598">
    <property type="entry name" value="GTPase_YsxC"/>
    <property type="match status" value="1"/>
</dbReference>
<dbReference type="PANTHER" id="PTHR11649:SF13">
    <property type="entry name" value="ENGB-TYPE G DOMAIN-CONTAINING PROTEIN"/>
    <property type="match status" value="1"/>
</dbReference>
<dbReference type="PANTHER" id="PTHR11649">
    <property type="entry name" value="MSS1/TRME-RELATED GTP-BINDING PROTEIN"/>
    <property type="match status" value="1"/>
</dbReference>
<dbReference type="Pfam" id="PF01926">
    <property type="entry name" value="MMR_HSR1"/>
    <property type="match status" value="1"/>
</dbReference>
<dbReference type="SUPFAM" id="SSF52540">
    <property type="entry name" value="P-loop containing nucleoside triphosphate hydrolases"/>
    <property type="match status" value="1"/>
</dbReference>
<dbReference type="PROSITE" id="PS51706">
    <property type="entry name" value="G_ENGB"/>
    <property type="match status" value="1"/>
</dbReference>
<evidence type="ECO:0000255" key="1">
    <source>
        <dbReference type="HAMAP-Rule" id="MF_00321"/>
    </source>
</evidence>
<organism>
    <name type="scientific">Dechloromonas aromatica (strain RCB)</name>
    <dbReference type="NCBI Taxonomy" id="159087"/>
    <lineage>
        <taxon>Bacteria</taxon>
        <taxon>Pseudomonadati</taxon>
        <taxon>Pseudomonadota</taxon>
        <taxon>Betaproteobacteria</taxon>
        <taxon>Rhodocyclales</taxon>
        <taxon>Azonexaceae</taxon>
        <taxon>Dechloromonas</taxon>
    </lineage>
</organism>
<sequence length="220" mass="24487">MPLFQKAVFLTTVANLRDLPQDSVREVAFAGRSNAGKSSAINTLAGRVRLAFVSKTPGRTQHLNYFTLDEGKYFVDLPGYGYAKAPEAIRSQWEGLIGPYLSKRDQLAGLVVIMDIRRPMTDLDLRLIDWFRPTGRPIHILLSKSDKLSRQDQTKALRSVKAEVATWGDADLYSVQLFSSLKKAGVEEAERVLASWLDIEIKQKENKGPPDKGSPGAKMP</sequence>